<evidence type="ECO:0000255" key="1">
    <source>
        <dbReference type="HAMAP-Rule" id="MF_01396"/>
    </source>
</evidence>
<name>ATPH_BRADI</name>
<reference key="1">
    <citation type="journal article" date="2008" name="BMC Res. Notes">
        <title>The complete chloroplast genome sequence of Brachypodium distachyon: sequence comparison and phylogenetic analysis of eight grass plastomes.</title>
        <authorList>
            <person name="Bortiri E."/>
            <person name="Coleman-Derr D."/>
            <person name="Lazo G.R."/>
            <person name="Anderson O.D."/>
            <person name="Gu Y.Q."/>
        </authorList>
    </citation>
    <scope>NUCLEOTIDE SEQUENCE [LARGE SCALE GENOMIC DNA]</scope>
    <source>
        <strain>cv. Bd21</strain>
    </source>
</reference>
<organism>
    <name type="scientific">Brachypodium distachyon</name>
    <name type="common">Purple false brome</name>
    <name type="synonym">Trachynia distachya</name>
    <dbReference type="NCBI Taxonomy" id="15368"/>
    <lineage>
        <taxon>Eukaryota</taxon>
        <taxon>Viridiplantae</taxon>
        <taxon>Streptophyta</taxon>
        <taxon>Embryophyta</taxon>
        <taxon>Tracheophyta</taxon>
        <taxon>Spermatophyta</taxon>
        <taxon>Magnoliopsida</taxon>
        <taxon>Liliopsida</taxon>
        <taxon>Poales</taxon>
        <taxon>Poaceae</taxon>
        <taxon>BOP clade</taxon>
        <taxon>Pooideae</taxon>
        <taxon>Stipodae</taxon>
        <taxon>Brachypodieae</taxon>
        <taxon>Brachypodium</taxon>
    </lineage>
</organism>
<protein>
    <recommendedName>
        <fullName evidence="1">ATP synthase subunit c, chloroplastic</fullName>
    </recommendedName>
    <alternativeName>
        <fullName evidence="1">ATP synthase F(0) sector subunit c</fullName>
    </alternativeName>
    <alternativeName>
        <fullName evidence="1">ATPase subunit III</fullName>
    </alternativeName>
    <alternativeName>
        <fullName evidence="1">F-type ATPase subunit c</fullName>
        <shortName evidence="1">F-ATPase subunit c</shortName>
    </alternativeName>
    <alternativeName>
        <fullName evidence="1">Lipid-binding protein</fullName>
    </alternativeName>
</protein>
<feature type="chain" id="PRO_0000362890" description="ATP synthase subunit c, chloroplastic">
    <location>
        <begin position="1"/>
        <end position="81"/>
    </location>
</feature>
<feature type="transmembrane region" description="Helical" evidence="1">
    <location>
        <begin position="3"/>
        <end position="23"/>
    </location>
</feature>
<feature type="transmembrane region" description="Helical" evidence="1">
    <location>
        <begin position="57"/>
        <end position="77"/>
    </location>
</feature>
<feature type="site" description="Reversibly protonated during proton transport" evidence="1">
    <location>
        <position position="61"/>
    </location>
</feature>
<gene>
    <name evidence="1" type="primary">atpH</name>
</gene>
<proteinExistence type="inferred from homology"/>
<geneLocation type="chloroplast"/>
<accession>B3TN46</accession>
<sequence>MNPLIAAASVIAAGLAVGLASIGPGVGQGTAAGQAVEGIARQPEAEGKIRGTLLLSLAFMEALTIYGLVVALALLFANPFV</sequence>
<comment type="function">
    <text evidence="1">F(1)F(0) ATP synthase produces ATP from ADP in the presence of a proton or sodium gradient. F-type ATPases consist of two structural domains, F(1) containing the extramembraneous catalytic core and F(0) containing the membrane proton channel, linked together by a central stalk and a peripheral stalk. During catalysis, ATP synthesis in the catalytic domain of F(1) is coupled via a rotary mechanism of the central stalk subunits to proton translocation.</text>
</comment>
<comment type="function">
    <text evidence="1">Key component of the F(0) channel; it plays a direct role in translocation across the membrane. A homomeric c-ring of between 10-14 subunits forms the central stalk rotor element with the F(1) delta and epsilon subunits.</text>
</comment>
<comment type="subunit">
    <text evidence="1">F-type ATPases have 2 components, F(1) - the catalytic core - and F(0) - the membrane proton channel. F(1) has five subunits: alpha(3), beta(3), gamma(1), delta(1), epsilon(1). F(0) has four main subunits: a(1), b(1), b'(1) and c(10-14). The alpha and beta chains form an alternating ring which encloses part of the gamma chain. F(1) is attached to F(0) by a central stalk formed by the gamma and epsilon chains, while a peripheral stalk is formed by the delta, b and b' chains.</text>
</comment>
<comment type="subcellular location">
    <subcellularLocation>
        <location evidence="1">Plastid</location>
        <location evidence="1">Chloroplast thylakoid membrane</location>
        <topology evidence="1">Multi-pass membrane protein</topology>
    </subcellularLocation>
</comment>
<comment type="miscellaneous">
    <text>In plastids the F-type ATPase is also known as CF(1)CF(0).</text>
</comment>
<comment type="similarity">
    <text evidence="1">Belongs to the ATPase C chain family.</text>
</comment>
<dbReference type="EMBL" id="EU325680">
    <property type="protein sequence ID" value="ACF08635.1"/>
    <property type="molecule type" value="Genomic_DNA"/>
</dbReference>
<dbReference type="RefSeq" id="YP_002000482.1">
    <property type="nucleotide sequence ID" value="NC_011032.1"/>
</dbReference>
<dbReference type="SMR" id="B3TN46"/>
<dbReference type="FunCoup" id="B3TN46">
    <property type="interactions" value="175"/>
</dbReference>
<dbReference type="STRING" id="15368.B3TN46"/>
<dbReference type="GeneID" id="6439782"/>
<dbReference type="KEGG" id="bdi:6439782"/>
<dbReference type="eggNOG" id="KOG0232">
    <property type="taxonomic scope" value="Eukaryota"/>
</dbReference>
<dbReference type="HOGENOM" id="CLU_148047_2_0_1"/>
<dbReference type="InParanoid" id="B3TN46"/>
<dbReference type="OMA" id="QPELMNE"/>
<dbReference type="Proteomes" id="UP000008810">
    <property type="component" value="Chloroplast"/>
</dbReference>
<dbReference type="GO" id="GO:0009535">
    <property type="term" value="C:chloroplast thylakoid membrane"/>
    <property type="evidence" value="ECO:0007669"/>
    <property type="project" value="UniProtKB-SubCell"/>
</dbReference>
<dbReference type="GO" id="GO:0045259">
    <property type="term" value="C:proton-transporting ATP synthase complex"/>
    <property type="evidence" value="ECO:0007669"/>
    <property type="project" value="UniProtKB-KW"/>
</dbReference>
<dbReference type="GO" id="GO:0033177">
    <property type="term" value="C:proton-transporting two-sector ATPase complex, proton-transporting domain"/>
    <property type="evidence" value="ECO:0007669"/>
    <property type="project" value="InterPro"/>
</dbReference>
<dbReference type="GO" id="GO:0008289">
    <property type="term" value="F:lipid binding"/>
    <property type="evidence" value="ECO:0007669"/>
    <property type="project" value="UniProtKB-KW"/>
</dbReference>
<dbReference type="GO" id="GO:0046933">
    <property type="term" value="F:proton-transporting ATP synthase activity, rotational mechanism"/>
    <property type="evidence" value="ECO:0007669"/>
    <property type="project" value="UniProtKB-UniRule"/>
</dbReference>
<dbReference type="GO" id="GO:0015986">
    <property type="term" value="P:proton motive force-driven ATP synthesis"/>
    <property type="evidence" value="ECO:0000318"/>
    <property type="project" value="GO_Central"/>
</dbReference>
<dbReference type="CDD" id="cd18183">
    <property type="entry name" value="ATP-synt_Fo_c_ATPH"/>
    <property type="match status" value="1"/>
</dbReference>
<dbReference type="FunFam" id="1.20.20.10:FF:000001">
    <property type="entry name" value="ATP synthase subunit c, chloroplastic"/>
    <property type="match status" value="1"/>
</dbReference>
<dbReference type="Gene3D" id="1.20.20.10">
    <property type="entry name" value="F1F0 ATP synthase subunit C"/>
    <property type="match status" value="1"/>
</dbReference>
<dbReference type="HAMAP" id="MF_01396">
    <property type="entry name" value="ATP_synth_c_bact"/>
    <property type="match status" value="1"/>
</dbReference>
<dbReference type="InterPro" id="IPR005953">
    <property type="entry name" value="ATP_synth_csu_bac/chlpt"/>
</dbReference>
<dbReference type="InterPro" id="IPR000454">
    <property type="entry name" value="ATP_synth_F0_csu"/>
</dbReference>
<dbReference type="InterPro" id="IPR020537">
    <property type="entry name" value="ATP_synth_F0_csu_DDCD_BS"/>
</dbReference>
<dbReference type="InterPro" id="IPR038662">
    <property type="entry name" value="ATP_synth_F0_csu_sf"/>
</dbReference>
<dbReference type="InterPro" id="IPR002379">
    <property type="entry name" value="ATPase_proteolipid_c-like_dom"/>
</dbReference>
<dbReference type="InterPro" id="IPR035921">
    <property type="entry name" value="F/V-ATP_Csub_sf"/>
</dbReference>
<dbReference type="NCBIfam" id="TIGR01260">
    <property type="entry name" value="ATP_synt_c"/>
    <property type="match status" value="1"/>
</dbReference>
<dbReference type="NCBIfam" id="NF005608">
    <property type="entry name" value="PRK07354.1"/>
    <property type="match status" value="1"/>
</dbReference>
<dbReference type="PANTHER" id="PTHR10031">
    <property type="entry name" value="ATP SYNTHASE LIPID-BINDING PROTEIN, MITOCHONDRIAL"/>
    <property type="match status" value="1"/>
</dbReference>
<dbReference type="PANTHER" id="PTHR10031:SF0">
    <property type="entry name" value="ATPASE PROTEIN 9"/>
    <property type="match status" value="1"/>
</dbReference>
<dbReference type="Pfam" id="PF00137">
    <property type="entry name" value="ATP-synt_C"/>
    <property type="match status" value="1"/>
</dbReference>
<dbReference type="PRINTS" id="PR00124">
    <property type="entry name" value="ATPASEC"/>
</dbReference>
<dbReference type="SUPFAM" id="SSF81333">
    <property type="entry name" value="F1F0 ATP synthase subunit C"/>
    <property type="match status" value="1"/>
</dbReference>
<dbReference type="PROSITE" id="PS00605">
    <property type="entry name" value="ATPASE_C"/>
    <property type="match status" value="1"/>
</dbReference>
<keyword id="KW-0066">ATP synthesis</keyword>
<keyword id="KW-0138">CF(0)</keyword>
<keyword id="KW-0150">Chloroplast</keyword>
<keyword id="KW-0375">Hydrogen ion transport</keyword>
<keyword id="KW-0406">Ion transport</keyword>
<keyword id="KW-0446">Lipid-binding</keyword>
<keyword id="KW-0472">Membrane</keyword>
<keyword id="KW-0934">Plastid</keyword>
<keyword id="KW-1185">Reference proteome</keyword>
<keyword id="KW-0793">Thylakoid</keyword>
<keyword id="KW-0812">Transmembrane</keyword>
<keyword id="KW-1133">Transmembrane helix</keyword>
<keyword id="KW-0813">Transport</keyword>